<accession>Q827D7</accession>
<evidence type="ECO:0000255" key="1">
    <source>
        <dbReference type="HAMAP-Rule" id="MF_00711"/>
    </source>
</evidence>
<evidence type="ECO:0000305" key="2"/>
<dbReference type="EC" id="1.4.4.2" evidence="1"/>
<dbReference type="EMBL" id="BA000030">
    <property type="protein sequence ID" value="BAC74698.1"/>
    <property type="status" value="ALT_INIT"/>
    <property type="molecule type" value="Genomic_DNA"/>
</dbReference>
<dbReference type="RefSeq" id="WP_037646993.1">
    <property type="nucleotide sequence ID" value="NZ_JZJK01000085.1"/>
</dbReference>
<dbReference type="SMR" id="Q827D7"/>
<dbReference type="GeneID" id="41544063"/>
<dbReference type="KEGG" id="sma:SAVERM_6987"/>
<dbReference type="eggNOG" id="COG0403">
    <property type="taxonomic scope" value="Bacteria"/>
</dbReference>
<dbReference type="eggNOG" id="COG1003">
    <property type="taxonomic scope" value="Bacteria"/>
</dbReference>
<dbReference type="HOGENOM" id="CLU_004620_3_2_11"/>
<dbReference type="OrthoDB" id="9801272at2"/>
<dbReference type="Proteomes" id="UP000000428">
    <property type="component" value="Chromosome"/>
</dbReference>
<dbReference type="GO" id="GO:0005829">
    <property type="term" value="C:cytosol"/>
    <property type="evidence" value="ECO:0007669"/>
    <property type="project" value="TreeGrafter"/>
</dbReference>
<dbReference type="GO" id="GO:0005960">
    <property type="term" value="C:glycine cleavage complex"/>
    <property type="evidence" value="ECO:0007669"/>
    <property type="project" value="TreeGrafter"/>
</dbReference>
<dbReference type="GO" id="GO:0016594">
    <property type="term" value="F:glycine binding"/>
    <property type="evidence" value="ECO:0007669"/>
    <property type="project" value="TreeGrafter"/>
</dbReference>
<dbReference type="GO" id="GO:0004375">
    <property type="term" value="F:glycine dehydrogenase (decarboxylating) activity"/>
    <property type="evidence" value="ECO:0007669"/>
    <property type="project" value="UniProtKB-EC"/>
</dbReference>
<dbReference type="GO" id="GO:0030170">
    <property type="term" value="F:pyridoxal phosphate binding"/>
    <property type="evidence" value="ECO:0007669"/>
    <property type="project" value="TreeGrafter"/>
</dbReference>
<dbReference type="GO" id="GO:0009058">
    <property type="term" value="P:biosynthetic process"/>
    <property type="evidence" value="ECO:0007669"/>
    <property type="project" value="UniProtKB-ARBA"/>
</dbReference>
<dbReference type="GO" id="GO:0019464">
    <property type="term" value="P:glycine decarboxylation via glycine cleavage system"/>
    <property type="evidence" value="ECO:0007669"/>
    <property type="project" value="UniProtKB-UniRule"/>
</dbReference>
<dbReference type="CDD" id="cd00613">
    <property type="entry name" value="GDC-P"/>
    <property type="match status" value="2"/>
</dbReference>
<dbReference type="FunFam" id="3.40.640.10:FF:000005">
    <property type="entry name" value="Glycine dehydrogenase (decarboxylating), mitochondrial"/>
    <property type="match status" value="1"/>
</dbReference>
<dbReference type="FunFam" id="3.90.1150.10:FF:000007">
    <property type="entry name" value="Glycine dehydrogenase (decarboxylating), mitochondrial"/>
    <property type="match status" value="1"/>
</dbReference>
<dbReference type="FunFam" id="3.40.640.10:FF:000007">
    <property type="entry name" value="glycine dehydrogenase (Decarboxylating), mitochondrial"/>
    <property type="match status" value="1"/>
</dbReference>
<dbReference type="Gene3D" id="3.90.1150.10">
    <property type="entry name" value="Aspartate Aminotransferase, domain 1"/>
    <property type="match status" value="2"/>
</dbReference>
<dbReference type="Gene3D" id="3.40.640.10">
    <property type="entry name" value="Type I PLP-dependent aspartate aminotransferase-like (Major domain)"/>
    <property type="match status" value="2"/>
</dbReference>
<dbReference type="HAMAP" id="MF_00711">
    <property type="entry name" value="GcvP"/>
    <property type="match status" value="1"/>
</dbReference>
<dbReference type="InterPro" id="IPR003437">
    <property type="entry name" value="GcvP"/>
</dbReference>
<dbReference type="InterPro" id="IPR049316">
    <property type="entry name" value="GDC-P_C"/>
</dbReference>
<dbReference type="InterPro" id="IPR049315">
    <property type="entry name" value="GDC-P_N"/>
</dbReference>
<dbReference type="InterPro" id="IPR020581">
    <property type="entry name" value="GDC_P"/>
</dbReference>
<dbReference type="InterPro" id="IPR015424">
    <property type="entry name" value="PyrdxlP-dep_Trfase"/>
</dbReference>
<dbReference type="InterPro" id="IPR015421">
    <property type="entry name" value="PyrdxlP-dep_Trfase_major"/>
</dbReference>
<dbReference type="InterPro" id="IPR015422">
    <property type="entry name" value="PyrdxlP-dep_Trfase_small"/>
</dbReference>
<dbReference type="NCBIfam" id="TIGR00461">
    <property type="entry name" value="gcvP"/>
    <property type="match status" value="1"/>
</dbReference>
<dbReference type="NCBIfam" id="NF001696">
    <property type="entry name" value="PRK00451.1"/>
    <property type="match status" value="1"/>
</dbReference>
<dbReference type="NCBIfam" id="NF003346">
    <property type="entry name" value="PRK04366.1"/>
    <property type="match status" value="1"/>
</dbReference>
<dbReference type="PANTHER" id="PTHR11773:SF1">
    <property type="entry name" value="GLYCINE DEHYDROGENASE (DECARBOXYLATING), MITOCHONDRIAL"/>
    <property type="match status" value="1"/>
</dbReference>
<dbReference type="PANTHER" id="PTHR11773">
    <property type="entry name" value="GLYCINE DEHYDROGENASE, DECARBOXYLATING"/>
    <property type="match status" value="1"/>
</dbReference>
<dbReference type="Pfam" id="PF21478">
    <property type="entry name" value="GcvP2_C"/>
    <property type="match status" value="1"/>
</dbReference>
<dbReference type="Pfam" id="PF02347">
    <property type="entry name" value="GDC-P"/>
    <property type="match status" value="2"/>
</dbReference>
<dbReference type="SUPFAM" id="SSF53383">
    <property type="entry name" value="PLP-dependent transferases"/>
    <property type="match status" value="2"/>
</dbReference>
<name>GCSP_STRAW</name>
<gene>
    <name evidence="1" type="primary">gcvP</name>
    <name type="synonym">gcvB</name>
    <name type="ordered locus">SAV_6987</name>
</gene>
<sequence>MTAHRIPLSDLEQGIPFEQRHIGPDSEARAKMLAQVGYGSLDELTATAVPDVIKNAEALELPGARTEAEVLAELRSLADRNQVLGSMIGLGYYGTFTPPVILRNVMENPAWYTAYTPYQPEISQGRLEALLNFQTVVAELTGLPTSGASLLDEGTAAAEAMALSRRMGKNKKGLFLVDADALPQTIAVIETRAEPTGVEVVVADLSEGIPAGIAEREINGVLIQYPGASGAVRDIKPLVEQAHELGAVVTVAADLLALTLLTSPGELGADIAVGTTQRFGVPMGFGGPHAGYMAVREKFARSLPGRLVGVSVDADGHKAYRLALQTREQHIRREKATSNICTAQVLLAVMAGMYAVYHGPDGLRTIARRTHRYATILAEGLKAGGVEVVHGAYFDTLTARVPGRAAEIVAAAREGGVNLHLVDADLVSISCDETTTRAQLGAVWTAFGVEGDIEALDAAAEDTLPAALLRTDDYLTHPVFHQYRSETAMLRYLRRLSDRDYALDRGMIPLGSCTMKLNATTEMEPVTWPEFGQLHPFAPAEQAQGYLTLIRELEERLAEVTGYDKVSLQPNAGSQGELAGLLAVRGYHRANGDEQRTVCLIPSSAHGTNAASAVMAGMKVVVVKTADDGEIDVEDLRAKIEQYRDELSVLMITYPSTHGVFEEHVADICAQVHEAGGQVYVDGANLNALVGLAKPGHFGGDVSHLNLHKTFCIPHGGGGPGVGPVGVRAHLAPYLPNHPLQPEAGPATGVGPISAAPWGSAGILPISWSYVRLMGGEGLKRATQVAVLSANYIAKRLEPHYPVLYTGPGGLVAHECIIDLRPLTKATGVSVDDIAKRLIDYGFHAPTMSFPVAGTLMIEPTESEDLGELDRFCEAMIAIRAEVEKVGSGEWPAEDNPLRNAPHTAAALGGEWEHAYSREEAVFPAGVSAADKYWPPVRRIDQAFGDRNLVCSCPPLDAYDD</sequence>
<reference key="1">
    <citation type="journal article" date="2001" name="Proc. Natl. Acad. Sci. U.S.A.">
        <title>Genome sequence of an industrial microorganism Streptomyces avermitilis: deducing the ability of producing secondary metabolites.</title>
        <authorList>
            <person name="Omura S."/>
            <person name="Ikeda H."/>
            <person name="Ishikawa J."/>
            <person name="Hanamoto A."/>
            <person name="Takahashi C."/>
            <person name="Shinose M."/>
            <person name="Takahashi Y."/>
            <person name="Horikawa H."/>
            <person name="Nakazawa H."/>
            <person name="Osonoe T."/>
            <person name="Kikuchi H."/>
            <person name="Shiba T."/>
            <person name="Sakaki Y."/>
            <person name="Hattori M."/>
        </authorList>
    </citation>
    <scope>NUCLEOTIDE SEQUENCE [LARGE SCALE GENOMIC DNA]</scope>
    <source>
        <strain>ATCC 31267 / DSM 46492 / JCM 5070 / NBRC 14893 / NCIMB 12804 / NRRL 8165 / MA-4680</strain>
    </source>
</reference>
<reference key="2">
    <citation type="journal article" date="2003" name="Nat. Biotechnol.">
        <title>Complete genome sequence and comparative analysis of the industrial microorganism Streptomyces avermitilis.</title>
        <authorList>
            <person name="Ikeda H."/>
            <person name="Ishikawa J."/>
            <person name="Hanamoto A."/>
            <person name="Shinose M."/>
            <person name="Kikuchi H."/>
            <person name="Shiba T."/>
            <person name="Sakaki Y."/>
            <person name="Hattori M."/>
            <person name="Omura S."/>
        </authorList>
    </citation>
    <scope>NUCLEOTIDE SEQUENCE [LARGE SCALE GENOMIC DNA]</scope>
    <source>
        <strain>ATCC 31267 / DSM 46492 / JCM 5070 / NBRC 14893 / NCIMB 12804 / NRRL 8165 / MA-4680</strain>
    </source>
</reference>
<comment type="function">
    <text evidence="1">The glycine cleavage system catalyzes the degradation of glycine. The P protein binds the alpha-amino group of glycine through its pyridoxal phosphate cofactor; CO(2) is released and the remaining methylamine moiety is then transferred to the lipoamide cofactor of the H protein.</text>
</comment>
<comment type="catalytic activity">
    <reaction evidence="1">
        <text>N(6)-[(R)-lipoyl]-L-lysyl-[glycine-cleavage complex H protein] + glycine + H(+) = N(6)-[(R)-S(8)-aminomethyldihydrolipoyl]-L-lysyl-[glycine-cleavage complex H protein] + CO2</text>
        <dbReference type="Rhea" id="RHEA:24304"/>
        <dbReference type="Rhea" id="RHEA-COMP:10494"/>
        <dbReference type="Rhea" id="RHEA-COMP:10495"/>
        <dbReference type="ChEBI" id="CHEBI:15378"/>
        <dbReference type="ChEBI" id="CHEBI:16526"/>
        <dbReference type="ChEBI" id="CHEBI:57305"/>
        <dbReference type="ChEBI" id="CHEBI:83099"/>
        <dbReference type="ChEBI" id="CHEBI:83143"/>
        <dbReference type="EC" id="1.4.4.2"/>
    </reaction>
</comment>
<comment type="cofactor">
    <cofactor evidence="1">
        <name>pyridoxal 5'-phosphate</name>
        <dbReference type="ChEBI" id="CHEBI:597326"/>
    </cofactor>
</comment>
<comment type="subunit">
    <text evidence="1">The glycine cleavage system is composed of four proteins: P, T, L and H.</text>
</comment>
<comment type="similarity">
    <text evidence="1">Belongs to the GcvP family.</text>
</comment>
<comment type="sequence caution" evidence="2">
    <conflict type="erroneous initiation">
        <sequence resource="EMBL-CDS" id="BAC74698"/>
    </conflict>
</comment>
<proteinExistence type="inferred from homology"/>
<protein>
    <recommendedName>
        <fullName evidence="1">Glycine dehydrogenase (decarboxylating)</fullName>
        <ecNumber evidence="1">1.4.4.2</ecNumber>
    </recommendedName>
    <alternativeName>
        <fullName evidence="1">Glycine cleavage system P-protein</fullName>
    </alternativeName>
    <alternativeName>
        <fullName evidence="1">Glycine decarboxylase</fullName>
    </alternativeName>
    <alternativeName>
        <fullName evidence="1">Glycine dehydrogenase (aminomethyl-transferring)</fullName>
    </alternativeName>
</protein>
<organism>
    <name type="scientific">Streptomyces avermitilis (strain ATCC 31267 / DSM 46492 / JCM 5070 / NBRC 14893 / NCIMB 12804 / NRRL 8165 / MA-4680)</name>
    <dbReference type="NCBI Taxonomy" id="227882"/>
    <lineage>
        <taxon>Bacteria</taxon>
        <taxon>Bacillati</taxon>
        <taxon>Actinomycetota</taxon>
        <taxon>Actinomycetes</taxon>
        <taxon>Kitasatosporales</taxon>
        <taxon>Streptomycetaceae</taxon>
        <taxon>Streptomyces</taxon>
    </lineage>
</organism>
<feature type="chain" id="PRO_0000166938" description="Glycine dehydrogenase (decarboxylating)">
    <location>
        <begin position="1"/>
        <end position="961"/>
    </location>
</feature>
<feature type="modified residue" description="N6-(pyridoxal phosphate)lysine" evidence="1">
    <location>
        <position position="709"/>
    </location>
</feature>
<keyword id="KW-0560">Oxidoreductase</keyword>
<keyword id="KW-0663">Pyridoxal phosphate</keyword>
<keyword id="KW-1185">Reference proteome</keyword>